<reference key="1">
    <citation type="journal article" date="1998" name="DNA Res.">
        <title>Structural analysis of Arabidopsis thaliana chromosome 5. IV. Sequence features of the regions of 1,456,315 bp covered by nineteen physically assigned P1 and TAC clones.</title>
        <authorList>
            <person name="Sato S."/>
            <person name="Kaneko T."/>
            <person name="Kotani H."/>
            <person name="Nakamura Y."/>
            <person name="Asamizu E."/>
            <person name="Miyajima N."/>
            <person name="Tabata S."/>
        </authorList>
    </citation>
    <scope>NUCLEOTIDE SEQUENCE [LARGE SCALE GENOMIC DNA]</scope>
    <source>
        <strain>cv. Columbia</strain>
    </source>
</reference>
<reference key="2">
    <citation type="journal article" date="2017" name="Plant J.">
        <title>Araport11: a complete reannotation of the Arabidopsis thaliana reference genome.</title>
        <authorList>
            <person name="Cheng C.Y."/>
            <person name="Krishnakumar V."/>
            <person name="Chan A.P."/>
            <person name="Thibaud-Nissen F."/>
            <person name="Schobel S."/>
            <person name="Town C.D."/>
        </authorList>
    </citation>
    <scope>GENOME REANNOTATION</scope>
    <source>
        <strain>cv. Columbia</strain>
    </source>
</reference>
<reference key="3">
    <citation type="journal article" date="2005" name="Plant Physiol.">
        <title>Genome organization of more than 300 defensin-like genes in Arabidopsis.</title>
        <authorList>
            <person name="Silverstein K.A.T."/>
            <person name="Graham M.A."/>
            <person name="Paape T.D."/>
            <person name="VandenBosch K.A."/>
        </authorList>
    </citation>
    <scope>GENE FAMILY</scope>
</reference>
<gene>
    <name type="ordered locus">At5g39365</name>
    <name type="ORF">MUL8</name>
</gene>
<protein>
    <recommendedName>
        <fullName>Putative defensin-like protein 40</fullName>
    </recommendedName>
</protein>
<comment type="subcellular location">
    <subcellularLocation>
        <location evidence="1">Secreted</location>
    </subcellularLocation>
</comment>
<comment type="similarity">
    <text evidence="3">Belongs to the DEFL family.</text>
</comment>
<dbReference type="EMBL" id="AB009054">
    <property type="status" value="NOT_ANNOTATED_CDS"/>
    <property type="molecule type" value="Genomic_DNA"/>
</dbReference>
<dbReference type="EMBL" id="CP002688">
    <property type="protein sequence ID" value="AED94425.1"/>
    <property type="molecule type" value="Genomic_DNA"/>
</dbReference>
<dbReference type="RefSeq" id="NP_001031984.1">
    <property type="nucleotide sequence ID" value="NM_001036907.2"/>
</dbReference>
<dbReference type="SMR" id="Q2V325"/>
<dbReference type="STRING" id="3702.Q2V325"/>
<dbReference type="PaxDb" id="3702-AT5G39365.1"/>
<dbReference type="EnsemblPlants" id="AT5G39365.1">
    <property type="protein sequence ID" value="AT5G39365.1"/>
    <property type="gene ID" value="AT5G39365"/>
</dbReference>
<dbReference type="GeneID" id="3771374"/>
<dbReference type="Gramene" id="AT5G39365.1">
    <property type="protein sequence ID" value="AT5G39365.1"/>
    <property type="gene ID" value="AT5G39365"/>
</dbReference>
<dbReference type="KEGG" id="ath:AT5G39365"/>
<dbReference type="Araport" id="AT5G39365"/>
<dbReference type="TAIR" id="AT5G39365"/>
<dbReference type="HOGENOM" id="CLU_191724_0_0_1"/>
<dbReference type="InParanoid" id="Q2V325"/>
<dbReference type="OMA" id="CKESCAN"/>
<dbReference type="PhylomeDB" id="Q2V325"/>
<dbReference type="PRO" id="PR:Q2V325"/>
<dbReference type="Proteomes" id="UP000006548">
    <property type="component" value="Chromosome 5"/>
</dbReference>
<dbReference type="ExpressionAtlas" id="Q2V325">
    <property type="expression patterns" value="baseline"/>
</dbReference>
<dbReference type="GO" id="GO:0005576">
    <property type="term" value="C:extracellular region"/>
    <property type="evidence" value="ECO:0007669"/>
    <property type="project" value="UniProtKB-SubCell"/>
</dbReference>
<dbReference type="GO" id="GO:0050832">
    <property type="term" value="P:defense response to fungus"/>
    <property type="evidence" value="ECO:0007669"/>
    <property type="project" value="UniProtKB-KW"/>
</dbReference>
<dbReference type="GO" id="GO:0031640">
    <property type="term" value="P:killing of cells of another organism"/>
    <property type="evidence" value="ECO:0007669"/>
    <property type="project" value="UniProtKB-KW"/>
</dbReference>
<sequence length="89" mass="9458">MAGIANGVGLLISFMLICGGMPKGHALGTSPYCEKVLSRFAPPGNCLKKNGNALCKESCANEQFREGVCLHLPKPQSKLNCYCSVLKCP</sequence>
<keyword id="KW-0929">Antimicrobial</keyword>
<keyword id="KW-1015">Disulfide bond</keyword>
<keyword id="KW-0295">Fungicide</keyword>
<keyword id="KW-0611">Plant defense</keyword>
<keyword id="KW-1185">Reference proteome</keyword>
<keyword id="KW-0964">Secreted</keyword>
<keyword id="KW-0732">Signal</keyword>
<evidence type="ECO:0000250" key="1"/>
<evidence type="ECO:0000255" key="2"/>
<evidence type="ECO:0000305" key="3"/>
<organism>
    <name type="scientific">Arabidopsis thaliana</name>
    <name type="common">Mouse-ear cress</name>
    <dbReference type="NCBI Taxonomy" id="3702"/>
    <lineage>
        <taxon>Eukaryota</taxon>
        <taxon>Viridiplantae</taxon>
        <taxon>Streptophyta</taxon>
        <taxon>Embryophyta</taxon>
        <taxon>Tracheophyta</taxon>
        <taxon>Spermatophyta</taxon>
        <taxon>Magnoliopsida</taxon>
        <taxon>eudicotyledons</taxon>
        <taxon>Gunneridae</taxon>
        <taxon>Pentapetalae</taxon>
        <taxon>rosids</taxon>
        <taxon>malvids</taxon>
        <taxon>Brassicales</taxon>
        <taxon>Brassicaceae</taxon>
        <taxon>Camelineae</taxon>
        <taxon>Arabidopsis</taxon>
    </lineage>
</organism>
<proteinExistence type="inferred from homology"/>
<accession>Q2V325</accession>
<feature type="signal peptide" evidence="2">
    <location>
        <begin position="1"/>
        <end position="26"/>
    </location>
</feature>
<feature type="chain" id="PRO_0000379622" description="Putative defensin-like protein 40">
    <location>
        <begin position="27"/>
        <end position="89"/>
    </location>
</feature>
<feature type="disulfide bond" evidence="1">
    <location>
        <begin position="33"/>
        <end position="88"/>
    </location>
</feature>
<feature type="disulfide bond" evidence="1">
    <location>
        <begin position="46"/>
        <end position="69"/>
    </location>
</feature>
<feature type="disulfide bond" evidence="1">
    <location>
        <begin position="55"/>
        <end position="81"/>
    </location>
</feature>
<feature type="disulfide bond" evidence="1">
    <location>
        <begin position="59"/>
        <end position="83"/>
    </location>
</feature>
<name>DEF40_ARATH</name>